<sequence length="205" mass="21498">MSNILLITSSPRGDESVSNKFAGELAGKLKAKSASNTLVHRDLAADPIPHLDTVKTAAIRKPADQRTAEESVAADYSDKLVTELLAADTVVIGTGLINFNIYSGLKSWIDNVARAGQTFKYTETGPVGLATGKKVYIVLAAAGVYSEGPAVSMNHAVPYLKTVLGFMGMTDVEVIYVEGLAFGPEAVEKAVAAAEAKVEELAQAA</sequence>
<protein>
    <recommendedName>
        <fullName evidence="1">FMN-dependent NADH:quinone oxidoreductase</fullName>
        <ecNumber evidence="1">1.6.5.-</ecNumber>
    </recommendedName>
    <alternativeName>
        <fullName evidence="1">Azo-dye reductase</fullName>
    </alternativeName>
    <alternativeName>
        <fullName evidence="1">FMN-dependent NADH-azo compound oxidoreductase</fullName>
    </alternativeName>
    <alternativeName>
        <fullName evidence="1">FMN-dependent NADH-azoreductase</fullName>
        <ecNumber evidence="1">1.7.1.17</ecNumber>
    </alternativeName>
</protein>
<feature type="chain" id="PRO_0000166321" description="FMN-dependent NADH:quinone oxidoreductase">
    <location>
        <begin position="1"/>
        <end position="205"/>
    </location>
</feature>
<feature type="binding site" evidence="1">
    <location>
        <position position="10"/>
    </location>
    <ligand>
        <name>FMN</name>
        <dbReference type="ChEBI" id="CHEBI:58210"/>
    </ligand>
</feature>
<feature type="binding site" evidence="1">
    <location>
        <begin position="16"/>
        <end position="18"/>
    </location>
    <ligand>
        <name>FMN</name>
        <dbReference type="ChEBI" id="CHEBI:58210"/>
    </ligand>
</feature>
<evidence type="ECO:0000255" key="1">
    <source>
        <dbReference type="HAMAP-Rule" id="MF_01216"/>
    </source>
</evidence>
<gene>
    <name evidence="1" type="primary">azoR</name>
    <name type="ordered locus">Atu1208</name>
    <name type="ORF">AGR_C_2230</name>
</gene>
<proteinExistence type="inferred from homology"/>
<name>AZOR_AGRFC</name>
<comment type="function">
    <text evidence="1">Quinone reductase that provides resistance to thiol-specific stress caused by electrophilic quinones.</text>
</comment>
<comment type="function">
    <text evidence="1">Also exhibits azoreductase activity. Catalyzes the reductive cleavage of the azo bond in aromatic azo compounds to the corresponding amines.</text>
</comment>
<comment type="catalytic activity">
    <reaction evidence="1">
        <text>2 a quinone + NADH + H(+) = 2 a 1,4-benzosemiquinone + NAD(+)</text>
        <dbReference type="Rhea" id="RHEA:65952"/>
        <dbReference type="ChEBI" id="CHEBI:15378"/>
        <dbReference type="ChEBI" id="CHEBI:57540"/>
        <dbReference type="ChEBI" id="CHEBI:57945"/>
        <dbReference type="ChEBI" id="CHEBI:132124"/>
        <dbReference type="ChEBI" id="CHEBI:134225"/>
    </reaction>
</comment>
<comment type="catalytic activity">
    <reaction evidence="1">
        <text>N,N-dimethyl-1,4-phenylenediamine + anthranilate + 2 NAD(+) = 2-(4-dimethylaminophenyl)diazenylbenzoate + 2 NADH + 2 H(+)</text>
        <dbReference type="Rhea" id="RHEA:55872"/>
        <dbReference type="ChEBI" id="CHEBI:15378"/>
        <dbReference type="ChEBI" id="CHEBI:15783"/>
        <dbReference type="ChEBI" id="CHEBI:16567"/>
        <dbReference type="ChEBI" id="CHEBI:57540"/>
        <dbReference type="ChEBI" id="CHEBI:57945"/>
        <dbReference type="ChEBI" id="CHEBI:71579"/>
        <dbReference type="EC" id="1.7.1.17"/>
    </reaction>
</comment>
<comment type="cofactor">
    <cofactor evidence="1">
        <name>FMN</name>
        <dbReference type="ChEBI" id="CHEBI:58210"/>
    </cofactor>
    <text evidence="1">Binds 1 FMN per subunit.</text>
</comment>
<comment type="subunit">
    <text evidence="1">Homodimer.</text>
</comment>
<comment type="similarity">
    <text evidence="1">Belongs to the azoreductase type 1 family.</text>
</comment>
<keyword id="KW-0285">Flavoprotein</keyword>
<keyword id="KW-0288">FMN</keyword>
<keyword id="KW-0520">NAD</keyword>
<keyword id="KW-0560">Oxidoreductase</keyword>
<keyword id="KW-1185">Reference proteome</keyword>
<accession>Q8UG34</accession>
<reference key="1">
    <citation type="journal article" date="2001" name="Science">
        <title>The genome of the natural genetic engineer Agrobacterium tumefaciens C58.</title>
        <authorList>
            <person name="Wood D.W."/>
            <person name="Setubal J.C."/>
            <person name="Kaul R."/>
            <person name="Monks D.E."/>
            <person name="Kitajima J.P."/>
            <person name="Okura V.K."/>
            <person name="Zhou Y."/>
            <person name="Chen L."/>
            <person name="Wood G.E."/>
            <person name="Almeida N.F. Jr."/>
            <person name="Woo L."/>
            <person name="Chen Y."/>
            <person name="Paulsen I.T."/>
            <person name="Eisen J.A."/>
            <person name="Karp P.D."/>
            <person name="Bovee D. Sr."/>
            <person name="Chapman P."/>
            <person name="Clendenning J."/>
            <person name="Deatherage G."/>
            <person name="Gillet W."/>
            <person name="Grant C."/>
            <person name="Kutyavin T."/>
            <person name="Levy R."/>
            <person name="Li M.-J."/>
            <person name="McClelland E."/>
            <person name="Palmieri A."/>
            <person name="Raymond C."/>
            <person name="Rouse G."/>
            <person name="Saenphimmachak C."/>
            <person name="Wu Z."/>
            <person name="Romero P."/>
            <person name="Gordon D."/>
            <person name="Zhang S."/>
            <person name="Yoo H."/>
            <person name="Tao Y."/>
            <person name="Biddle P."/>
            <person name="Jung M."/>
            <person name="Krespan W."/>
            <person name="Perry M."/>
            <person name="Gordon-Kamm B."/>
            <person name="Liao L."/>
            <person name="Kim S."/>
            <person name="Hendrick C."/>
            <person name="Zhao Z.-Y."/>
            <person name="Dolan M."/>
            <person name="Chumley F."/>
            <person name="Tingey S.V."/>
            <person name="Tomb J.-F."/>
            <person name="Gordon M.P."/>
            <person name="Olson M.V."/>
            <person name="Nester E.W."/>
        </authorList>
    </citation>
    <scope>NUCLEOTIDE SEQUENCE [LARGE SCALE GENOMIC DNA]</scope>
    <source>
        <strain>C58 / ATCC 33970</strain>
    </source>
</reference>
<reference key="2">
    <citation type="journal article" date="2001" name="Science">
        <title>Genome sequence of the plant pathogen and biotechnology agent Agrobacterium tumefaciens C58.</title>
        <authorList>
            <person name="Goodner B."/>
            <person name="Hinkle G."/>
            <person name="Gattung S."/>
            <person name="Miller N."/>
            <person name="Blanchard M."/>
            <person name="Qurollo B."/>
            <person name="Goldman B.S."/>
            <person name="Cao Y."/>
            <person name="Askenazi M."/>
            <person name="Halling C."/>
            <person name="Mullin L."/>
            <person name="Houmiel K."/>
            <person name="Gordon J."/>
            <person name="Vaudin M."/>
            <person name="Iartchouk O."/>
            <person name="Epp A."/>
            <person name="Liu F."/>
            <person name="Wollam C."/>
            <person name="Allinger M."/>
            <person name="Doughty D."/>
            <person name="Scott C."/>
            <person name="Lappas C."/>
            <person name="Markelz B."/>
            <person name="Flanagan C."/>
            <person name="Crowell C."/>
            <person name="Gurson J."/>
            <person name="Lomo C."/>
            <person name="Sear C."/>
            <person name="Strub G."/>
            <person name="Cielo C."/>
            <person name="Slater S."/>
        </authorList>
    </citation>
    <scope>NUCLEOTIDE SEQUENCE [LARGE SCALE GENOMIC DNA]</scope>
    <source>
        <strain>C58 / ATCC 33970</strain>
    </source>
</reference>
<dbReference type="EC" id="1.6.5.-" evidence="1"/>
<dbReference type="EC" id="1.7.1.17" evidence="1"/>
<dbReference type="EMBL" id="AE007869">
    <property type="protein sequence ID" value="AAK87010.2"/>
    <property type="molecule type" value="Genomic_DNA"/>
</dbReference>
<dbReference type="PIR" id="A97507">
    <property type="entry name" value="A97507"/>
</dbReference>
<dbReference type="PIR" id="AE2725">
    <property type="entry name" value="AE2725"/>
</dbReference>
<dbReference type="RefSeq" id="NP_354225.2">
    <property type="nucleotide sequence ID" value="NC_003062.2"/>
</dbReference>
<dbReference type="RefSeq" id="WP_006312782.1">
    <property type="nucleotide sequence ID" value="NC_003062.2"/>
</dbReference>
<dbReference type="SMR" id="Q8UG34"/>
<dbReference type="STRING" id="176299.Atu1208"/>
<dbReference type="EnsemblBacteria" id="AAK87010">
    <property type="protein sequence ID" value="AAK87010"/>
    <property type="gene ID" value="Atu1208"/>
</dbReference>
<dbReference type="GeneID" id="1133246"/>
<dbReference type="KEGG" id="atu:Atu1208"/>
<dbReference type="PATRIC" id="fig|176299.10.peg.1228"/>
<dbReference type="eggNOG" id="COG1182">
    <property type="taxonomic scope" value="Bacteria"/>
</dbReference>
<dbReference type="HOGENOM" id="CLU_088964_0_0_5"/>
<dbReference type="OrthoDB" id="9787136at2"/>
<dbReference type="PhylomeDB" id="Q8UG34"/>
<dbReference type="BioCyc" id="AGRO:ATU1208-MONOMER"/>
<dbReference type="Proteomes" id="UP000000813">
    <property type="component" value="Chromosome circular"/>
</dbReference>
<dbReference type="GO" id="GO:0009055">
    <property type="term" value="F:electron transfer activity"/>
    <property type="evidence" value="ECO:0007669"/>
    <property type="project" value="UniProtKB-UniRule"/>
</dbReference>
<dbReference type="GO" id="GO:0010181">
    <property type="term" value="F:FMN binding"/>
    <property type="evidence" value="ECO:0007669"/>
    <property type="project" value="UniProtKB-UniRule"/>
</dbReference>
<dbReference type="GO" id="GO:0016652">
    <property type="term" value="F:oxidoreductase activity, acting on NAD(P)H as acceptor"/>
    <property type="evidence" value="ECO:0007669"/>
    <property type="project" value="UniProtKB-UniRule"/>
</dbReference>
<dbReference type="GO" id="GO:0016655">
    <property type="term" value="F:oxidoreductase activity, acting on NAD(P)H, quinone or similar compound as acceptor"/>
    <property type="evidence" value="ECO:0007669"/>
    <property type="project" value="InterPro"/>
</dbReference>
<dbReference type="Gene3D" id="3.40.50.360">
    <property type="match status" value="1"/>
</dbReference>
<dbReference type="HAMAP" id="MF_01216">
    <property type="entry name" value="Azoreductase_type1"/>
    <property type="match status" value="1"/>
</dbReference>
<dbReference type="InterPro" id="IPR003680">
    <property type="entry name" value="Flavodoxin_fold"/>
</dbReference>
<dbReference type="InterPro" id="IPR029039">
    <property type="entry name" value="Flavoprotein-like_sf"/>
</dbReference>
<dbReference type="InterPro" id="IPR050104">
    <property type="entry name" value="FMN-dep_NADH:Q_OxRdtase_AzoR1"/>
</dbReference>
<dbReference type="InterPro" id="IPR023048">
    <property type="entry name" value="NADH:quinone_OxRdtase_FMN_depd"/>
</dbReference>
<dbReference type="PANTHER" id="PTHR43741">
    <property type="entry name" value="FMN-DEPENDENT NADH-AZOREDUCTASE 1"/>
    <property type="match status" value="1"/>
</dbReference>
<dbReference type="PANTHER" id="PTHR43741:SF2">
    <property type="entry name" value="FMN-DEPENDENT NADH:QUINONE OXIDOREDUCTASE"/>
    <property type="match status" value="1"/>
</dbReference>
<dbReference type="Pfam" id="PF02525">
    <property type="entry name" value="Flavodoxin_2"/>
    <property type="match status" value="1"/>
</dbReference>
<dbReference type="SUPFAM" id="SSF52218">
    <property type="entry name" value="Flavoproteins"/>
    <property type="match status" value="1"/>
</dbReference>
<organism>
    <name type="scientific">Agrobacterium fabrum (strain C58 / ATCC 33970)</name>
    <name type="common">Agrobacterium tumefaciens (strain C58)</name>
    <dbReference type="NCBI Taxonomy" id="176299"/>
    <lineage>
        <taxon>Bacteria</taxon>
        <taxon>Pseudomonadati</taxon>
        <taxon>Pseudomonadota</taxon>
        <taxon>Alphaproteobacteria</taxon>
        <taxon>Hyphomicrobiales</taxon>
        <taxon>Rhizobiaceae</taxon>
        <taxon>Rhizobium/Agrobacterium group</taxon>
        <taxon>Agrobacterium</taxon>
        <taxon>Agrobacterium tumefaciens complex</taxon>
    </lineage>
</organism>